<dbReference type="EMBL" id="X07234">
    <property type="protein sequence ID" value="CAA30198.1"/>
    <property type="molecule type" value="Genomic_DNA"/>
</dbReference>
<dbReference type="PIR" id="S03230">
    <property type="entry name" value="S03230"/>
</dbReference>
<dbReference type="RefSeq" id="NP_039796.1">
    <property type="nucleotide sequence ID" value="NC_001338.1"/>
</dbReference>
<dbReference type="KEGG" id="vg:2559657"/>
<dbReference type="Proteomes" id="UP000000854">
    <property type="component" value="Genome"/>
</dbReference>
<organism>
    <name type="scientific">Sulfolobus spindle-shape virus 1</name>
    <name type="common">SSV1</name>
    <dbReference type="NCBI Taxonomy" id="244589"/>
    <lineage>
        <taxon>Viruses</taxon>
        <taxon>Viruses incertae sedis</taxon>
        <taxon>Fuselloviridae</taxon>
        <taxon>Alphafusellovirus</taxon>
    </lineage>
</organism>
<sequence>MRKSLLALLTLSLALLSFLITPSMALNSGGSPIPIYYNYYNYYSLNAEGFGFSFNNSNNWVETNFISITINLPSSLPNNYQINNAYSIVVGLSPYPVSNINIFNSPLEAYVELFSNPPNTYPNEIGFVVSYGSTVFYSYTTLYSSFAGTQLTITISYTGNGFGVQFSDSNGFSHSVSVSSVNFVPYGALILGSLIPNGNYYYYPVGNMLPNASVNFSYTISSFTIEGNPATSVDITTLGLEGNTAIYTSSSNWFKWVSGSVVITNAVAYTYTDLARIGGSAQINYTASQLY</sequence>
<name>A291_SSV1</name>
<proteinExistence type="predicted"/>
<comment type="function">
    <text evidence="1">Essential for virus function.</text>
</comment>
<organismHost>
    <name type="scientific">Saccharolobus solfataricus</name>
    <name type="common">Sulfolobus solfataricus</name>
    <dbReference type="NCBI Taxonomy" id="2287"/>
</organismHost>
<accession>P20197</accession>
<gene>
    <name type="ORF">a291</name>
</gene>
<feature type="chain" id="PRO_0000223027" description="Uncharacterized protein A-291">
    <location>
        <begin position="1"/>
        <end position="291"/>
    </location>
</feature>
<evidence type="ECO:0000269" key="1">
    <source>
    </source>
</evidence>
<keyword id="KW-1185">Reference proteome</keyword>
<reference key="1">
    <citation type="journal article" date="1991" name="Virology">
        <title>Complete nucleotide sequence of the virus SSV1 of the archaebacterium Sulfolobus shibatae.</title>
        <authorList>
            <person name="Palm P."/>
            <person name="Schleper C."/>
            <person name="Grampp B."/>
            <person name="Yeats S."/>
            <person name="McWilliam P."/>
            <person name="Reiter W.-D."/>
            <person name="Zillig W."/>
        </authorList>
    </citation>
    <scope>NUCLEOTIDE SEQUENCE [GENOMIC DNA]</scope>
</reference>
<reference key="2">
    <citation type="journal article" date="1999" name="Genetics">
        <title>Genetic requirements for the function of the archaeal virus SSV1 in Sulfolobus solfataricus: construction and testing of viral shuttle vectors.</title>
        <authorList>
            <person name="Stedman K.M."/>
            <person name="Schleper C."/>
            <person name="Rumpf E."/>
            <person name="Zillig W."/>
        </authorList>
    </citation>
    <scope>FUNCTION</scope>
</reference>
<protein>
    <recommendedName>
        <fullName>Uncharacterized protein A-291</fullName>
    </recommendedName>
</protein>